<name>LPXB_SALSV</name>
<feature type="chain" id="PRO_1000123064" description="Lipid-A-disaccharide synthase">
    <location>
        <begin position="1"/>
        <end position="382"/>
    </location>
</feature>
<dbReference type="EC" id="2.4.1.182" evidence="1"/>
<dbReference type="EMBL" id="CP001127">
    <property type="protein sequence ID" value="ACF91570.1"/>
    <property type="molecule type" value="Genomic_DNA"/>
</dbReference>
<dbReference type="RefSeq" id="WP_000741216.1">
    <property type="nucleotide sequence ID" value="NC_011094.1"/>
</dbReference>
<dbReference type="SMR" id="B4TYE2"/>
<dbReference type="CAZy" id="GT19">
    <property type="family name" value="Glycosyltransferase Family 19"/>
</dbReference>
<dbReference type="KEGG" id="sew:SeSA_A0255"/>
<dbReference type="HOGENOM" id="CLU_036577_3_0_6"/>
<dbReference type="UniPathway" id="UPA00359">
    <property type="reaction ID" value="UER00481"/>
</dbReference>
<dbReference type="Proteomes" id="UP000001865">
    <property type="component" value="Chromosome"/>
</dbReference>
<dbReference type="GO" id="GO:0016020">
    <property type="term" value="C:membrane"/>
    <property type="evidence" value="ECO:0007669"/>
    <property type="project" value="GOC"/>
</dbReference>
<dbReference type="GO" id="GO:0008915">
    <property type="term" value="F:lipid-A-disaccharide synthase activity"/>
    <property type="evidence" value="ECO:0007669"/>
    <property type="project" value="UniProtKB-UniRule"/>
</dbReference>
<dbReference type="GO" id="GO:0005543">
    <property type="term" value="F:phospholipid binding"/>
    <property type="evidence" value="ECO:0007669"/>
    <property type="project" value="TreeGrafter"/>
</dbReference>
<dbReference type="GO" id="GO:0009245">
    <property type="term" value="P:lipid A biosynthetic process"/>
    <property type="evidence" value="ECO:0007669"/>
    <property type="project" value="UniProtKB-UniRule"/>
</dbReference>
<dbReference type="CDD" id="cd01635">
    <property type="entry name" value="Glycosyltransferase_GTB-type"/>
    <property type="match status" value="1"/>
</dbReference>
<dbReference type="HAMAP" id="MF_00392">
    <property type="entry name" value="LpxB"/>
    <property type="match status" value="1"/>
</dbReference>
<dbReference type="InterPro" id="IPR003835">
    <property type="entry name" value="Glyco_trans_19"/>
</dbReference>
<dbReference type="NCBIfam" id="TIGR00215">
    <property type="entry name" value="lpxB"/>
    <property type="match status" value="1"/>
</dbReference>
<dbReference type="PANTHER" id="PTHR30372">
    <property type="entry name" value="LIPID-A-DISACCHARIDE SYNTHASE"/>
    <property type="match status" value="1"/>
</dbReference>
<dbReference type="PANTHER" id="PTHR30372:SF4">
    <property type="entry name" value="LIPID-A-DISACCHARIDE SYNTHASE, MITOCHONDRIAL-RELATED"/>
    <property type="match status" value="1"/>
</dbReference>
<dbReference type="Pfam" id="PF02684">
    <property type="entry name" value="LpxB"/>
    <property type="match status" value="1"/>
</dbReference>
<dbReference type="SUPFAM" id="SSF53756">
    <property type="entry name" value="UDP-Glycosyltransferase/glycogen phosphorylase"/>
    <property type="match status" value="1"/>
</dbReference>
<gene>
    <name evidence="1" type="primary">lpxB</name>
    <name type="ordered locus">SeSA_A0255</name>
</gene>
<accession>B4TYE2</accession>
<comment type="function">
    <text evidence="1">Condensation of UDP-2,3-diacylglucosamine and 2,3-diacylglucosamine-1-phosphate to form lipid A disaccharide, a precursor of lipid A, a phosphorylated glycolipid that anchors the lipopolysaccharide to the outer membrane of the cell.</text>
</comment>
<comment type="catalytic activity">
    <reaction evidence="1">
        <text>2-N,3-O-bis[(3R)-3-hydroxytetradecanoyl]-alpha-D-glucosaminyl 1-phosphate + UDP-2-N,3-O-bis[(3R)-3-hydroxytetradecanoyl]-alpha-D-glucosamine = lipid A disaccharide (E. coli) + UDP + H(+)</text>
        <dbReference type="Rhea" id="RHEA:22668"/>
        <dbReference type="ChEBI" id="CHEBI:15378"/>
        <dbReference type="ChEBI" id="CHEBI:57957"/>
        <dbReference type="ChEBI" id="CHEBI:58223"/>
        <dbReference type="ChEBI" id="CHEBI:58466"/>
        <dbReference type="ChEBI" id="CHEBI:78847"/>
    </reaction>
</comment>
<comment type="catalytic activity">
    <reaction evidence="1">
        <text>a lipid X + a UDP-2-N,3-O-bis[(3R)-3-hydroxyacyl]-alpha-D-glucosamine = a lipid A disaccharide + UDP + H(+)</text>
        <dbReference type="Rhea" id="RHEA:67828"/>
        <dbReference type="ChEBI" id="CHEBI:15378"/>
        <dbReference type="ChEBI" id="CHEBI:58223"/>
        <dbReference type="ChEBI" id="CHEBI:137748"/>
        <dbReference type="ChEBI" id="CHEBI:176338"/>
        <dbReference type="ChEBI" id="CHEBI:176343"/>
        <dbReference type="EC" id="2.4.1.182"/>
    </reaction>
</comment>
<comment type="pathway">
    <text evidence="1">Glycolipid biosynthesis; lipid IV(A) biosynthesis; lipid IV(A) from (3R)-3-hydroxytetradecanoyl-[acyl-carrier-protein] and UDP-N-acetyl-alpha-D-glucosamine: step 5/6.</text>
</comment>
<comment type="similarity">
    <text evidence="1">Belongs to the LpxB family.</text>
</comment>
<reference key="1">
    <citation type="journal article" date="2011" name="J. Bacteriol.">
        <title>Comparative genomics of 28 Salmonella enterica isolates: evidence for CRISPR-mediated adaptive sublineage evolution.</title>
        <authorList>
            <person name="Fricke W.F."/>
            <person name="Mammel M.K."/>
            <person name="McDermott P.F."/>
            <person name="Tartera C."/>
            <person name="White D.G."/>
            <person name="Leclerc J.E."/>
            <person name="Ravel J."/>
            <person name="Cebula T.A."/>
        </authorList>
    </citation>
    <scope>NUCLEOTIDE SEQUENCE [LARGE SCALE GENOMIC DNA]</scope>
    <source>
        <strain>CVM19633</strain>
    </source>
</reference>
<evidence type="ECO:0000255" key="1">
    <source>
        <dbReference type="HAMAP-Rule" id="MF_00392"/>
    </source>
</evidence>
<organism>
    <name type="scientific">Salmonella schwarzengrund (strain CVM19633)</name>
    <dbReference type="NCBI Taxonomy" id="439843"/>
    <lineage>
        <taxon>Bacteria</taxon>
        <taxon>Pseudomonadati</taxon>
        <taxon>Pseudomonadota</taxon>
        <taxon>Gammaproteobacteria</taxon>
        <taxon>Enterobacterales</taxon>
        <taxon>Enterobacteriaceae</taxon>
        <taxon>Salmonella</taxon>
    </lineage>
</organism>
<proteinExistence type="inferred from homology"/>
<protein>
    <recommendedName>
        <fullName evidence="1">Lipid-A-disaccharide synthase</fullName>
        <ecNumber evidence="1">2.4.1.182</ecNumber>
    </recommendedName>
</protein>
<sequence length="382" mass="42452">MAAQRPLTIALVAGETSGDILGAGLIRALKARVPNARFVGVAGPRMQAEGCEAWYEMEELAVMGIVEVLGRLRRLLHIRADLTRRFTELKPDVFVGIDAPDFNITLEGNLKKQGIKTIHYVSPSVWAWRQKRVFKIGRSTHMVLAFLPFEKAFYDKFNVPCRFIGHTMADAMPLDPDKNAARDVLGIPHDAHCLALLPGSRGAEVEMLSADFLKTAQLLRQRYPDLEVVVPLVNAKRREQFEKIKAEVAPDLAVHLLDGMAREAMIASDAALLASGTAALECMLAKCPMVVGYRMKPFTFWLAKRLVKTEYVSLPNLLAGRELVKELLQEECEPQKLAEALLPLLANGKTSHAMHDTFRELHQQIRCNADEQAADAVLELAQ</sequence>
<keyword id="KW-0328">Glycosyltransferase</keyword>
<keyword id="KW-0441">Lipid A biosynthesis</keyword>
<keyword id="KW-0444">Lipid biosynthesis</keyword>
<keyword id="KW-0443">Lipid metabolism</keyword>
<keyword id="KW-0808">Transferase</keyword>